<comment type="function">
    <text evidence="1">One of several proteins that assist in the late maturation steps of the functional core of the 30S ribosomal subunit. Helps release RbfA from mature subunits. May play a role in the assembly of ribosomal proteins into the subunit. Circularly permuted GTPase that catalyzes slow GTP hydrolysis, GTPase activity is stimulated by the 30S ribosomal subunit.</text>
</comment>
<comment type="cofactor">
    <cofactor evidence="1">
        <name>Zn(2+)</name>
        <dbReference type="ChEBI" id="CHEBI:29105"/>
    </cofactor>
    <text evidence="1">Binds 1 zinc ion per subunit.</text>
</comment>
<comment type="subunit">
    <text evidence="1">Monomer. Associates with 30S ribosomal subunit, binds 16S rRNA.</text>
</comment>
<comment type="subcellular location">
    <subcellularLocation>
        <location evidence="1">Cytoplasm</location>
    </subcellularLocation>
</comment>
<comment type="similarity">
    <text evidence="1">Belongs to the TRAFAC class YlqF/YawG GTPase family. RsgA subfamily.</text>
</comment>
<reference key="1">
    <citation type="journal article" date="2008" name="PLoS ONE">
        <title>Genome biology of Actinobacillus pleuropneumoniae JL03, an isolate of serotype 3 prevalent in China.</title>
        <authorList>
            <person name="Xu Z."/>
            <person name="Zhou Y."/>
            <person name="Li L."/>
            <person name="Zhou R."/>
            <person name="Xiao S."/>
            <person name="Wan Y."/>
            <person name="Zhang S."/>
            <person name="Wang K."/>
            <person name="Li W."/>
            <person name="Li L."/>
            <person name="Jin H."/>
            <person name="Kang M."/>
            <person name="Dalai B."/>
            <person name="Li T."/>
            <person name="Liu L."/>
            <person name="Cheng Y."/>
            <person name="Zhang L."/>
            <person name="Xu T."/>
            <person name="Zheng H."/>
            <person name="Pu S."/>
            <person name="Wang B."/>
            <person name="Gu W."/>
            <person name="Zhang X.L."/>
            <person name="Zhu G.-F."/>
            <person name="Wang S."/>
            <person name="Zhao G.-P."/>
            <person name="Chen H."/>
        </authorList>
    </citation>
    <scope>NUCLEOTIDE SEQUENCE [LARGE SCALE GENOMIC DNA]</scope>
    <source>
        <strain>JL03</strain>
    </source>
</reference>
<organism>
    <name type="scientific">Actinobacillus pleuropneumoniae serotype 3 (strain JL03)</name>
    <dbReference type="NCBI Taxonomy" id="434271"/>
    <lineage>
        <taxon>Bacteria</taxon>
        <taxon>Pseudomonadati</taxon>
        <taxon>Pseudomonadota</taxon>
        <taxon>Gammaproteobacteria</taxon>
        <taxon>Pasteurellales</taxon>
        <taxon>Pasteurellaceae</taxon>
        <taxon>Actinobacillus</taxon>
    </lineage>
</organism>
<gene>
    <name evidence="1" type="primary">rsgA</name>
    <name type="ordered locus">APJL_0131</name>
</gene>
<dbReference type="EC" id="3.6.1.-" evidence="1"/>
<dbReference type="EMBL" id="CP000687">
    <property type="protein sequence ID" value="ABY68735.1"/>
    <property type="molecule type" value="Genomic_DNA"/>
</dbReference>
<dbReference type="RefSeq" id="WP_005600146.1">
    <property type="nucleotide sequence ID" value="NC_010278.1"/>
</dbReference>
<dbReference type="SMR" id="B0BS35"/>
<dbReference type="KEGG" id="apj:APJL_0131"/>
<dbReference type="HOGENOM" id="CLU_033617_2_0_6"/>
<dbReference type="Proteomes" id="UP000008547">
    <property type="component" value="Chromosome"/>
</dbReference>
<dbReference type="GO" id="GO:0005737">
    <property type="term" value="C:cytoplasm"/>
    <property type="evidence" value="ECO:0007669"/>
    <property type="project" value="UniProtKB-SubCell"/>
</dbReference>
<dbReference type="GO" id="GO:0005525">
    <property type="term" value="F:GTP binding"/>
    <property type="evidence" value="ECO:0007669"/>
    <property type="project" value="UniProtKB-UniRule"/>
</dbReference>
<dbReference type="GO" id="GO:0003924">
    <property type="term" value="F:GTPase activity"/>
    <property type="evidence" value="ECO:0007669"/>
    <property type="project" value="UniProtKB-UniRule"/>
</dbReference>
<dbReference type="GO" id="GO:0046872">
    <property type="term" value="F:metal ion binding"/>
    <property type="evidence" value="ECO:0007669"/>
    <property type="project" value="UniProtKB-KW"/>
</dbReference>
<dbReference type="GO" id="GO:0019843">
    <property type="term" value="F:rRNA binding"/>
    <property type="evidence" value="ECO:0007669"/>
    <property type="project" value="UniProtKB-KW"/>
</dbReference>
<dbReference type="GO" id="GO:0042274">
    <property type="term" value="P:ribosomal small subunit biogenesis"/>
    <property type="evidence" value="ECO:0007669"/>
    <property type="project" value="UniProtKB-UniRule"/>
</dbReference>
<dbReference type="CDD" id="cd01854">
    <property type="entry name" value="YjeQ_EngC"/>
    <property type="match status" value="1"/>
</dbReference>
<dbReference type="Gene3D" id="2.40.50.140">
    <property type="entry name" value="Nucleic acid-binding proteins"/>
    <property type="match status" value="1"/>
</dbReference>
<dbReference type="Gene3D" id="3.40.50.300">
    <property type="entry name" value="P-loop containing nucleotide triphosphate hydrolases"/>
    <property type="match status" value="1"/>
</dbReference>
<dbReference type="Gene3D" id="1.10.40.50">
    <property type="entry name" value="Probable gtpase engc, domain 3"/>
    <property type="match status" value="1"/>
</dbReference>
<dbReference type="HAMAP" id="MF_01820">
    <property type="entry name" value="GTPase_RsgA"/>
    <property type="match status" value="1"/>
</dbReference>
<dbReference type="InterPro" id="IPR030378">
    <property type="entry name" value="G_CP_dom"/>
</dbReference>
<dbReference type="InterPro" id="IPR012340">
    <property type="entry name" value="NA-bd_OB-fold"/>
</dbReference>
<dbReference type="InterPro" id="IPR027417">
    <property type="entry name" value="P-loop_NTPase"/>
</dbReference>
<dbReference type="InterPro" id="IPR004881">
    <property type="entry name" value="Ribosome_biogen_GTPase_RsgA"/>
</dbReference>
<dbReference type="InterPro" id="IPR010914">
    <property type="entry name" value="RsgA_GTPase_dom"/>
</dbReference>
<dbReference type="NCBIfam" id="NF008931">
    <property type="entry name" value="PRK12288.1"/>
    <property type="match status" value="1"/>
</dbReference>
<dbReference type="NCBIfam" id="TIGR00157">
    <property type="entry name" value="ribosome small subunit-dependent GTPase A"/>
    <property type="match status" value="1"/>
</dbReference>
<dbReference type="PANTHER" id="PTHR32120">
    <property type="entry name" value="SMALL RIBOSOMAL SUBUNIT BIOGENESIS GTPASE RSGA"/>
    <property type="match status" value="1"/>
</dbReference>
<dbReference type="PANTHER" id="PTHR32120:SF11">
    <property type="entry name" value="SMALL RIBOSOMAL SUBUNIT BIOGENESIS GTPASE RSGA 1, MITOCHONDRIAL-RELATED"/>
    <property type="match status" value="1"/>
</dbReference>
<dbReference type="Pfam" id="PF03193">
    <property type="entry name" value="RsgA_GTPase"/>
    <property type="match status" value="1"/>
</dbReference>
<dbReference type="SUPFAM" id="SSF52540">
    <property type="entry name" value="P-loop containing nucleoside triphosphate hydrolases"/>
    <property type="match status" value="1"/>
</dbReference>
<dbReference type="PROSITE" id="PS50936">
    <property type="entry name" value="ENGC_GTPASE"/>
    <property type="match status" value="1"/>
</dbReference>
<dbReference type="PROSITE" id="PS51721">
    <property type="entry name" value="G_CP"/>
    <property type="match status" value="1"/>
</dbReference>
<keyword id="KW-0963">Cytoplasm</keyword>
<keyword id="KW-0342">GTP-binding</keyword>
<keyword id="KW-0378">Hydrolase</keyword>
<keyword id="KW-0479">Metal-binding</keyword>
<keyword id="KW-0547">Nucleotide-binding</keyword>
<keyword id="KW-0690">Ribosome biogenesis</keyword>
<keyword id="KW-0694">RNA-binding</keyword>
<keyword id="KW-0699">rRNA-binding</keyword>
<keyword id="KW-0862">Zinc</keyword>
<feature type="chain" id="PRO_1000188023" description="Small ribosomal subunit biogenesis GTPase RsgA">
    <location>
        <begin position="1"/>
        <end position="344"/>
    </location>
</feature>
<feature type="domain" description="CP-type G" evidence="2">
    <location>
        <begin position="100"/>
        <end position="268"/>
    </location>
</feature>
<feature type="binding site" evidence="1">
    <location>
        <begin position="156"/>
        <end position="159"/>
    </location>
    <ligand>
        <name>GTP</name>
        <dbReference type="ChEBI" id="CHEBI:37565"/>
    </ligand>
</feature>
<feature type="binding site" evidence="1">
    <location>
        <begin position="210"/>
        <end position="218"/>
    </location>
    <ligand>
        <name>GTP</name>
        <dbReference type="ChEBI" id="CHEBI:37565"/>
    </ligand>
</feature>
<feature type="binding site" evidence="1">
    <location>
        <position position="292"/>
    </location>
    <ligand>
        <name>Zn(2+)</name>
        <dbReference type="ChEBI" id="CHEBI:29105"/>
    </ligand>
</feature>
<feature type="binding site" evidence="1">
    <location>
        <position position="297"/>
    </location>
    <ligand>
        <name>Zn(2+)</name>
        <dbReference type="ChEBI" id="CHEBI:29105"/>
    </ligand>
</feature>
<feature type="binding site" evidence="1">
    <location>
        <position position="299"/>
    </location>
    <ligand>
        <name>Zn(2+)</name>
        <dbReference type="ChEBI" id="CHEBI:29105"/>
    </ligand>
</feature>
<feature type="binding site" evidence="1">
    <location>
        <position position="305"/>
    </location>
    <ligand>
        <name>Zn(2+)</name>
        <dbReference type="ChEBI" id="CHEBI:29105"/>
    </ligand>
</feature>
<name>RSGA_ACTPJ</name>
<accession>B0BS35</accession>
<protein>
    <recommendedName>
        <fullName evidence="1">Small ribosomal subunit biogenesis GTPase RsgA</fullName>
        <ecNumber evidence="1">3.6.1.-</ecNumber>
    </recommendedName>
</protein>
<proteinExistence type="inferred from homology"/>
<sequence>MSKRRLTQNQQRRIKSNHHKKIAKPELEWQDEMLGEVQQGIVVTRHAKHADVETEQGEIYRCNLRRTLKNVVVGDQVSWRKGNEQLQGISGVIEAIYPRKNELSRPDYYDGIKVMAANIDQIIIVSAVLPTLSLNIIDRYLVICETAKIPALIVLNKIDLLSESERQEVQKQLAIYENIGYETLCLSADTGENMEKLDRYLSRGTSIFVGQSGVGKSSLINQLLPEVNALTGAVSDISGLGQHTTTSSRLYHLPQGGNLIDSPGIREFGLWHLEPEQITLGYREFQSVLGTCKFRDCKHKSDPGCAVREAVEKGEINAIRFENYHRLIESRDETKSQRHFRTEE</sequence>
<evidence type="ECO:0000255" key="1">
    <source>
        <dbReference type="HAMAP-Rule" id="MF_01820"/>
    </source>
</evidence>
<evidence type="ECO:0000255" key="2">
    <source>
        <dbReference type="PROSITE-ProRule" id="PRU01058"/>
    </source>
</evidence>